<name>ISPD_CHLMU</name>
<gene>
    <name evidence="1" type="primary">ispD</name>
    <name type="ordered locus">TC_0747</name>
</gene>
<dbReference type="EC" id="2.7.7.60" evidence="1"/>
<dbReference type="EMBL" id="AE002160">
    <property type="protein sequence ID" value="AAF39554.1"/>
    <property type="molecule type" value="Genomic_DNA"/>
</dbReference>
<dbReference type="PIR" id="C81669">
    <property type="entry name" value="C81669"/>
</dbReference>
<dbReference type="RefSeq" id="WP_010231427.1">
    <property type="nucleotide sequence ID" value="NZ_CP063055.1"/>
</dbReference>
<dbReference type="SMR" id="Q9PJT1"/>
<dbReference type="GeneID" id="1246110"/>
<dbReference type="KEGG" id="cmu:TC_0747"/>
<dbReference type="eggNOG" id="COG1211">
    <property type="taxonomic scope" value="Bacteria"/>
</dbReference>
<dbReference type="HOGENOM" id="CLU_061281_3_0_0"/>
<dbReference type="OrthoDB" id="9806837at2"/>
<dbReference type="UniPathway" id="UPA00056">
    <property type="reaction ID" value="UER00093"/>
</dbReference>
<dbReference type="Proteomes" id="UP000000800">
    <property type="component" value="Chromosome"/>
</dbReference>
<dbReference type="GO" id="GO:0050518">
    <property type="term" value="F:2-C-methyl-D-erythritol 4-phosphate cytidylyltransferase activity"/>
    <property type="evidence" value="ECO:0007669"/>
    <property type="project" value="UniProtKB-UniRule"/>
</dbReference>
<dbReference type="GO" id="GO:0019288">
    <property type="term" value="P:isopentenyl diphosphate biosynthetic process, methylerythritol 4-phosphate pathway"/>
    <property type="evidence" value="ECO:0007669"/>
    <property type="project" value="UniProtKB-UniRule"/>
</dbReference>
<dbReference type="CDD" id="cd02516">
    <property type="entry name" value="CDP-ME_synthetase"/>
    <property type="match status" value="1"/>
</dbReference>
<dbReference type="Gene3D" id="3.90.550.10">
    <property type="entry name" value="Spore Coat Polysaccharide Biosynthesis Protein SpsA, Chain A"/>
    <property type="match status" value="1"/>
</dbReference>
<dbReference type="HAMAP" id="MF_00108">
    <property type="entry name" value="IspD"/>
    <property type="match status" value="1"/>
</dbReference>
<dbReference type="InterPro" id="IPR001228">
    <property type="entry name" value="IspD"/>
</dbReference>
<dbReference type="InterPro" id="IPR034683">
    <property type="entry name" value="IspD/TarI"/>
</dbReference>
<dbReference type="InterPro" id="IPR050088">
    <property type="entry name" value="IspD/TarI_cytidylyltransf_bact"/>
</dbReference>
<dbReference type="InterPro" id="IPR018294">
    <property type="entry name" value="ISPD_synthase_CS"/>
</dbReference>
<dbReference type="InterPro" id="IPR029044">
    <property type="entry name" value="Nucleotide-diphossugar_trans"/>
</dbReference>
<dbReference type="NCBIfam" id="TIGR00453">
    <property type="entry name" value="ispD"/>
    <property type="match status" value="1"/>
</dbReference>
<dbReference type="PANTHER" id="PTHR32125">
    <property type="entry name" value="2-C-METHYL-D-ERYTHRITOL 4-PHOSPHATE CYTIDYLYLTRANSFERASE, CHLOROPLASTIC"/>
    <property type="match status" value="1"/>
</dbReference>
<dbReference type="PANTHER" id="PTHR32125:SF4">
    <property type="entry name" value="2-C-METHYL-D-ERYTHRITOL 4-PHOSPHATE CYTIDYLYLTRANSFERASE, CHLOROPLASTIC"/>
    <property type="match status" value="1"/>
</dbReference>
<dbReference type="Pfam" id="PF01128">
    <property type="entry name" value="IspD"/>
    <property type="match status" value="1"/>
</dbReference>
<dbReference type="SUPFAM" id="SSF53448">
    <property type="entry name" value="Nucleotide-diphospho-sugar transferases"/>
    <property type="match status" value="1"/>
</dbReference>
<dbReference type="PROSITE" id="PS01295">
    <property type="entry name" value="ISPD"/>
    <property type="match status" value="1"/>
</dbReference>
<sequence>MNLSCSLVLLGGGRGERFNSPQPKQYTPLCGEPLILHALHSYQSLPFIQEIVVVCEEHYQELFSPYSVKFASPGALRQDSVFSGLQQVSLPWVCVHDGVRPFVYANEVSEVCSAALKTGAAALATSATYTIKSRTPVRTLDRDAVAVIHTPQCINTEILKEGLLLANMMDFTLSDDSEAAELLGIEPTLVFSNRVQMKITYPEDLLFAEALLSKAHIR</sequence>
<keyword id="KW-0414">Isoprene biosynthesis</keyword>
<keyword id="KW-0548">Nucleotidyltransferase</keyword>
<keyword id="KW-0808">Transferase</keyword>
<feature type="chain" id="PRO_0000075560" description="2-C-methyl-D-erythritol 4-phosphate cytidylyltransferase">
    <location>
        <begin position="1"/>
        <end position="218"/>
    </location>
</feature>
<feature type="site" description="Transition state stabilizer" evidence="1">
    <location>
        <position position="17"/>
    </location>
</feature>
<feature type="site" description="Transition state stabilizer" evidence="1">
    <location>
        <position position="24"/>
    </location>
</feature>
<feature type="site" description="Positions MEP for the nucleophilic attack" evidence="1">
    <location>
        <position position="142"/>
    </location>
</feature>
<feature type="site" description="Positions MEP for the nucleophilic attack" evidence="1">
    <location>
        <position position="198"/>
    </location>
</feature>
<protein>
    <recommendedName>
        <fullName evidence="1">2-C-methyl-D-erythritol 4-phosphate cytidylyltransferase</fullName>
        <ecNumber evidence="1">2.7.7.60</ecNumber>
    </recommendedName>
    <alternativeName>
        <fullName evidence="1">4-diphosphocytidyl-2C-methyl-D-erythritol synthase</fullName>
    </alternativeName>
    <alternativeName>
        <fullName evidence="1">MEP cytidylyltransferase</fullName>
        <shortName evidence="1">MCT</shortName>
    </alternativeName>
</protein>
<accession>Q9PJT1</accession>
<comment type="function">
    <text evidence="1">Catalyzes the formation of 4-diphosphocytidyl-2-C-methyl-D-erythritol from CTP and 2-C-methyl-D-erythritol 4-phosphate (MEP).</text>
</comment>
<comment type="catalytic activity">
    <reaction evidence="1">
        <text>2-C-methyl-D-erythritol 4-phosphate + CTP + H(+) = 4-CDP-2-C-methyl-D-erythritol + diphosphate</text>
        <dbReference type="Rhea" id="RHEA:13429"/>
        <dbReference type="ChEBI" id="CHEBI:15378"/>
        <dbReference type="ChEBI" id="CHEBI:33019"/>
        <dbReference type="ChEBI" id="CHEBI:37563"/>
        <dbReference type="ChEBI" id="CHEBI:57823"/>
        <dbReference type="ChEBI" id="CHEBI:58262"/>
        <dbReference type="EC" id="2.7.7.60"/>
    </reaction>
</comment>
<comment type="pathway">
    <text evidence="1">Isoprenoid biosynthesis; isopentenyl diphosphate biosynthesis via DXP pathway; isopentenyl diphosphate from 1-deoxy-D-xylulose 5-phosphate: step 2/6.</text>
</comment>
<comment type="similarity">
    <text evidence="1">Belongs to the IspD/TarI cytidylyltransferase family. IspD subfamily.</text>
</comment>
<reference key="1">
    <citation type="journal article" date="2000" name="Nucleic Acids Res.">
        <title>Genome sequences of Chlamydia trachomatis MoPn and Chlamydia pneumoniae AR39.</title>
        <authorList>
            <person name="Read T.D."/>
            <person name="Brunham R.C."/>
            <person name="Shen C."/>
            <person name="Gill S.R."/>
            <person name="Heidelberg J.F."/>
            <person name="White O."/>
            <person name="Hickey E.K."/>
            <person name="Peterson J.D."/>
            <person name="Utterback T.R."/>
            <person name="Berry K.J."/>
            <person name="Bass S."/>
            <person name="Linher K.D."/>
            <person name="Weidman J.F."/>
            <person name="Khouri H.M."/>
            <person name="Craven B."/>
            <person name="Bowman C."/>
            <person name="Dodson R.J."/>
            <person name="Gwinn M.L."/>
            <person name="Nelson W.C."/>
            <person name="DeBoy R.T."/>
            <person name="Kolonay J.F."/>
            <person name="McClarty G."/>
            <person name="Salzberg S.L."/>
            <person name="Eisen J.A."/>
            <person name="Fraser C.M."/>
        </authorList>
    </citation>
    <scope>NUCLEOTIDE SEQUENCE [LARGE SCALE GENOMIC DNA]</scope>
    <source>
        <strain>MoPn / Nigg</strain>
    </source>
</reference>
<organism>
    <name type="scientific">Chlamydia muridarum (strain MoPn / Nigg)</name>
    <dbReference type="NCBI Taxonomy" id="243161"/>
    <lineage>
        <taxon>Bacteria</taxon>
        <taxon>Pseudomonadati</taxon>
        <taxon>Chlamydiota</taxon>
        <taxon>Chlamydiia</taxon>
        <taxon>Chlamydiales</taxon>
        <taxon>Chlamydiaceae</taxon>
        <taxon>Chlamydia/Chlamydophila group</taxon>
        <taxon>Chlamydia</taxon>
    </lineage>
</organism>
<evidence type="ECO:0000255" key="1">
    <source>
        <dbReference type="HAMAP-Rule" id="MF_00108"/>
    </source>
</evidence>
<proteinExistence type="inferred from homology"/>